<keyword id="KW-0167">Capsid protein</keyword>
<keyword id="KW-1153">Inner capsid protein</keyword>
<keyword id="KW-0677">Repeat</keyword>
<keyword id="KW-0694">RNA-binding</keyword>
<keyword id="KW-1141">T=2 icosahedral capsid protein</keyword>
<keyword id="KW-0832">Ubl conjugation</keyword>
<keyword id="KW-0946">Virion</keyword>
<protein>
    <recommendedName>
        <fullName evidence="1">Inner capsid protein VP2</fullName>
    </recommendedName>
</protein>
<accession>B1NKR8</accession>
<accession>A7J3A7</accession>
<organism>
    <name type="scientific">Rotavirus A (strain RVA/Human/United States/DS-1/1976/G2P1B[4])</name>
    <name type="common">RV-A</name>
    <name type="synonym">Rotavirus A (strain DS1)</name>
    <dbReference type="NCBI Taxonomy" id="10950"/>
    <lineage>
        <taxon>Viruses</taxon>
        <taxon>Riboviria</taxon>
        <taxon>Orthornavirae</taxon>
        <taxon>Duplornaviricota</taxon>
        <taxon>Resentoviricetes</taxon>
        <taxon>Reovirales</taxon>
        <taxon>Sedoreoviridae</taxon>
        <taxon>Rotavirus</taxon>
        <taxon>Rotavirus A</taxon>
    </lineage>
</organism>
<reference key="1">
    <citation type="journal article" date="2008" name="J. Virol.">
        <title>Molecular characterization of a subgroup specificity associated with the rotavirus inner capsid protein VP2.</title>
        <authorList>
            <person name="McDonald S.M."/>
            <person name="Patton J.T."/>
        </authorList>
    </citation>
    <scope>NUCLEOTIDE SEQUENCE [GENOMIC RNA]</scope>
</reference>
<reference key="2">
    <citation type="journal article" date="2008" name="J. Virol.">
        <title>Full genome-based classification of rotaviruses reveals a common origin between human Wa-Like and porcine rotavirus strains and human DS-1-like and bovine rotavirus strains.</title>
        <authorList>
            <person name="Matthijnssens J."/>
            <person name="Ciarlet M."/>
            <person name="Heiman E.M."/>
            <person name="Arijs I."/>
            <person name="Delbeke T."/>
            <person name="McDonald S.M."/>
            <person name="Palombo E.A."/>
            <person name="Iturriza-Gomara M."/>
            <person name="Maes P."/>
            <person name="Patton J.T."/>
            <person name="Rahman M."/>
            <person name="Van Ranst M."/>
        </authorList>
    </citation>
    <scope>NUCLEOTIDE SEQUENCE [GENOMIC RNA]</scope>
</reference>
<dbReference type="EMBL" id="EF583026">
    <property type="protein sequence ID" value="ABU87835.1"/>
    <property type="molecule type" value="Genomic_RNA"/>
</dbReference>
<dbReference type="EMBL" id="DQ870506">
    <property type="protein sequence ID" value="ABI58292.1"/>
    <property type="molecule type" value="Genomic_RNA"/>
</dbReference>
<dbReference type="SMR" id="B1NKR8"/>
<dbReference type="Proteomes" id="UP000001457">
    <property type="component" value="Genome"/>
</dbReference>
<dbReference type="GO" id="GO:0039616">
    <property type="term" value="C:T=2 icosahedral viral capsid"/>
    <property type="evidence" value="ECO:0007669"/>
    <property type="project" value="UniProtKB-UniRule"/>
</dbReference>
<dbReference type="GO" id="GO:0039625">
    <property type="term" value="C:viral inner capsid"/>
    <property type="evidence" value="ECO:0007669"/>
    <property type="project" value="UniProtKB-UniRule"/>
</dbReference>
<dbReference type="GO" id="GO:0019013">
    <property type="term" value="C:viral nucleocapsid"/>
    <property type="evidence" value="ECO:0007669"/>
    <property type="project" value="UniProtKB-UniRule"/>
</dbReference>
<dbReference type="GO" id="GO:0003723">
    <property type="term" value="F:RNA binding"/>
    <property type="evidence" value="ECO:0007669"/>
    <property type="project" value="UniProtKB-UniRule"/>
</dbReference>
<dbReference type="HAMAP" id="MF_04123">
    <property type="entry name" value="Rota_VP2"/>
    <property type="match status" value="1"/>
</dbReference>
<dbReference type="HAMAP" id="MF_04127">
    <property type="entry name" value="Rota_VP2_A"/>
    <property type="match status" value="1"/>
</dbReference>
<dbReference type="InterPro" id="IPR007779">
    <property type="entry name" value="Rotavirus_VP2"/>
</dbReference>
<dbReference type="Pfam" id="PF05087">
    <property type="entry name" value="Rota_VP2"/>
    <property type="match status" value="1"/>
</dbReference>
<feature type="chain" id="PRO_0000368063" description="Inner capsid protein VP2">
    <location>
        <begin position="1"/>
        <end position="879"/>
    </location>
</feature>
<feature type="region of interest" description="5-fold hub; involved in the encapsidation of VP1 and VP3" evidence="1">
    <location>
        <begin position="1"/>
        <end position="79"/>
    </location>
</feature>
<feature type="region of interest" description="Disordered" evidence="2">
    <location>
        <begin position="1"/>
        <end position="35"/>
    </location>
</feature>
<feature type="region of interest" description="Hydrophobic" evidence="1">
    <location>
        <begin position="393"/>
        <end position="413"/>
    </location>
</feature>
<feature type="region of interest" description="Hydrophobic" evidence="1">
    <location>
        <begin position="421"/>
        <end position="441"/>
    </location>
</feature>
<feature type="compositionally biased region" description="Basic and acidic residues" evidence="2">
    <location>
        <begin position="19"/>
        <end position="30"/>
    </location>
</feature>
<feature type="site" description="Interaction with the intermediate capsid protein VP6" evidence="1">
    <location>
        <position position="219"/>
    </location>
</feature>
<feature type="site" description="Interaction with the intermediate capsid protein VP6" evidence="1">
    <location>
        <position position="223"/>
    </location>
</feature>
<feature type="site" description="Interaction with the intermediate capsid protein VP6" evidence="1">
    <location>
        <position position="227"/>
    </location>
</feature>
<feature type="site" description="Interaction with the intermediate capsid protein VP6" evidence="1">
    <location>
        <position position="838"/>
    </location>
</feature>
<feature type="site" description="Interaction with the intermediate capsid protein VP6" evidence="1">
    <location>
        <position position="840"/>
    </location>
</feature>
<sequence length="879" mass="102311">MAYRKRGARREANLNNNDRMQEKNDEKQDSNKIQLSDKVLSKKEEIVTDSHEEVKITDEVKKSTKEESKQLLEVLKTKEEHQKEIQYEILQKTIPTFEPKETILKKLEDIKPELAKKQTKLFRIFEPKQLPIYRANGERELRNRWCWKLKKDTLPDGDYDVREYFLNLYDQVLTEMPDYLLLKDMAVENKNSRDAGKVVDSETASICDAIFQDEETEGAVRRFIAEMRQRVQADRNVVNYPSILHPIDYAFNEYFLQHQLVEPLNNDIIFNYIPERIRNDVNYILNMDRNLPSTARYIRPNLLQDRLNLHDNFESLWDTITTSNYILARSIVPDLKELVSTEAQIQKMSQDLQLEALTIQSETQFLTGINSQAANDCFKTLIAAMLSQRTMSLDFVTTNYMSLISGMWLLTVIPNDMFIRESLVACQLAIVNTIIYPAFGMQRMHYRNGDPQTPFQIAEQQIQNFQVANWLHFVNNNQFRQAVIDGVLNQVLNDNIRSGHVINQLMEALMQLSRQQFPTMPVDYKRSIQRGILLLSNRLGQLVDLTRLLAYNYETLMACITMNMQHVQTLTTEKLQLTSVTSLCMLIGNATVIPSPQTLFHYYNVNVNFHSNYNERINDAVAIITAANRLNLYQKKMKAIVEDFLKRLYIFDVSRVPDDQMYRLRDRLRLLPVEIRRLDIFNLILMNMDQIERASDKIAQGVIIAYRDMHLERDEMYGYVNIARNLDGFQQINLEELMRSGDYAQITNMLLNNQPVALVGALPFITDSSVISLIAKLDATVFAQIVKLRKVDTLKPILYKINSDSNDFYLVANYDWVPTSTTKVYKQVPQQFDFRNSMHMLTSNLTFTVYSDLLAFVSADTVEPINAVAFDNMRIMNEL</sequence>
<comment type="function">
    <text evidence="1">Inner capsid protein that self-assembles to form an icosahedral capsid with a T=2 symmetry, which consists of 120 copies of VP2, with channels at each of its five-fold vertices. This capsid constitutes the innermost concentric layer of the viral mature particle. It encapsidates the polymerase VP1, the capping enzyme VP3 and the genomic dsRNA, thereby defining the core. The innermost VP2 capsid and the intermediate VP6 capsid remain intact following cell entry to protect the dsRNA from degradation and to prevent unfavorable antiviral responses in the host cell during all the replication cycle of the virus. Nascent transcripts are transcribed within the structural confines of this double-layered particle (DLP) and are extruded through the channels formed by VP2 N-termini. VP2 is required for the replicase activity of VP1 polymerase. Probably recruits a copy of a VP1-VP3 complex, potentially along with a segment of plus-strand RNA, as a decamer of VP2 assembles. May activate the autoinhibited VP1/RNA complex to coordinate packaging and genome replication.</text>
</comment>
<comment type="subunit">
    <text evidence="1">Homodecamer; each decamer is made up of two conformers of VP2, called VP2A and VP2B. Interacts with a VP1-VP3 complex. Interacts with the intermediate capsid protein VP6. Interacts with NSP5. Interacts (via N-terminus) with NSP2.</text>
</comment>
<comment type="subcellular location">
    <subcellularLocation>
        <location evidence="1">Virion</location>
    </subcellularLocation>
    <text evidence="1">Inner capsid protein. Also found in spherical cytoplasmic structures, called virus factories, that appear early after infection and are the site of viral replication and packaging.</text>
</comment>
<comment type="domain">
    <text evidence="1">The N-terminus binds RNA. It is necessary for encapsidation of VP1 and VP3. The N-termini of 10 VP2 molecules form a cylindrical hub underneath each 5-fold axis of the inner capsid.</text>
</comment>
<comment type="PTM">
    <text evidence="1">Sumoylated with SUMO1 and SUMO2. Sumoylation of viral proteins seems to have a positive role on viral replication.</text>
</comment>
<comment type="similarity">
    <text evidence="1">Belongs to the rotavirus VP2 family.</text>
</comment>
<name>VP2_ROTHD</name>
<organismHost>
    <name type="scientific">Homo sapiens</name>
    <name type="common">Human</name>
    <dbReference type="NCBI Taxonomy" id="9606"/>
</organismHost>
<proteinExistence type="inferred from homology"/>
<evidence type="ECO:0000255" key="1">
    <source>
        <dbReference type="HAMAP-Rule" id="MF_04127"/>
    </source>
</evidence>
<evidence type="ECO:0000256" key="2">
    <source>
        <dbReference type="SAM" id="MobiDB-lite"/>
    </source>
</evidence>